<protein>
    <recommendedName>
        <fullName evidence="1">Secretory phospholipase A2</fullName>
        <ecNumber evidence="1">3.1.1.4</ecNumber>
    </recommendedName>
</protein>
<evidence type="ECO:0000250" key="1">
    <source>
        <dbReference type="UniProtKB" id="J4KMY5"/>
    </source>
</evidence>
<evidence type="ECO:0000250" key="2">
    <source>
        <dbReference type="UniProtKB" id="P00593"/>
    </source>
</evidence>
<evidence type="ECO:0000250" key="3">
    <source>
        <dbReference type="UniProtKB" id="P04054"/>
    </source>
</evidence>
<evidence type="ECO:0000255" key="4"/>
<evidence type="ECO:0000255" key="5">
    <source>
        <dbReference type="PROSITE-ProRule" id="PRU00498"/>
    </source>
</evidence>
<evidence type="ECO:0000269" key="6">
    <source>
    </source>
</evidence>
<evidence type="ECO:0000269" key="7">
    <source>
    </source>
</evidence>
<evidence type="ECO:0000305" key="8"/>
<sequence>MKLSVLLALGASSLAAAAPAATACDCGAAVTDRLLFSSSISTFQAARNALNPPCCDWSSDNCSSSPDKPRGYDFIPSCQRHDYGYRNGKRLNRFTEDYRKKVDDNFKADLYNYCSQFSGLESWKGVECRRYADIYYFFVRECGDGDCP</sequence>
<feature type="signal peptide" evidence="4">
    <location>
        <begin position="1"/>
        <end position="23"/>
    </location>
</feature>
<feature type="chain" id="PRO_5003053815" description="Secretory phospholipase A2">
    <location>
        <begin position="24"/>
        <end position="148"/>
    </location>
</feature>
<feature type="active site" evidence="2">
    <location>
        <position position="81"/>
    </location>
</feature>
<feature type="binding site" evidence="2">
    <location>
        <position position="82"/>
    </location>
    <ligand>
        <name>Ca(2+)</name>
        <dbReference type="ChEBI" id="CHEBI:29108"/>
    </ligand>
</feature>
<feature type="glycosylation site" description="N-linked (GlcNAc...) asparagine" evidence="5">
    <location>
        <position position="61"/>
    </location>
</feature>
<feature type="disulfide bond" evidence="3">
    <location>
        <begin position="62"/>
        <end position="78"/>
    </location>
</feature>
<gene>
    <name type="ORF">ARB_02001</name>
</gene>
<reference key="1">
    <citation type="journal article" date="2011" name="Genome Biol.">
        <title>Comparative and functional genomics provide insights into the pathogenicity of dermatophytic fungi.</title>
        <authorList>
            <person name="Burmester A."/>
            <person name="Shelest E."/>
            <person name="Gloeckner G."/>
            <person name="Heddergott C."/>
            <person name="Schindler S."/>
            <person name="Staib P."/>
            <person name="Heidel A."/>
            <person name="Felder M."/>
            <person name="Petzold A."/>
            <person name="Szafranski K."/>
            <person name="Feuermann M."/>
            <person name="Pedruzzi I."/>
            <person name="Priebe S."/>
            <person name="Groth M."/>
            <person name="Winkler R."/>
            <person name="Li W."/>
            <person name="Kniemeyer O."/>
            <person name="Schroeckh V."/>
            <person name="Hertweck C."/>
            <person name="Hube B."/>
            <person name="White T.C."/>
            <person name="Platzer M."/>
            <person name="Guthke R."/>
            <person name="Heitman J."/>
            <person name="Woestemeyer J."/>
            <person name="Zipfel P.F."/>
            <person name="Monod M."/>
            <person name="Brakhage A.A."/>
        </authorList>
    </citation>
    <scope>NUCLEOTIDE SEQUENCE [LARGE SCALE GENOMIC DNA]</scope>
    <scope>IDENTIFICATION BY MASS SPECTROMETRY</scope>
    <scope>SUBCELLULAR LOCATION</scope>
    <source>
        <strain>ATCC MYA-4681 / CBS 112371</strain>
    </source>
</reference>
<reference key="2">
    <citation type="journal article" date="2011" name="Proteomics">
        <title>Identification of novel secreted proteases during extracellular proteolysis by dermatophytes at acidic pH.</title>
        <authorList>
            <person name="Sriranganadane D."/>
            <person name="Waridel P."/>
            <person name="Salamin K."/>
            <person name="Feuermann M."/>
            <person name="Mignon B."/>
            <person name="Staib P."/>
            <person name="Neuhaus J.M."/>
            <person name="Quadroni M."/>
            <person name="Monod M."/>
        </authorList>
    </citation>
    <scope>IDENTIFICATION BY MASS SPECTROMETRY</scope>
    <scope>SUBCELLULAR LOCATION</scope>
</reference>
<accession>D4B0M5</accession>
<dbReference type="EC" id="3.1.1.4" evidence="1"/>
<dbReference type="EMBL" id="ABSU01000024">
    <property type="protein sequence ID" value="EFE31132.1"/>
    <property type="molecule type" value="Genomic_DNA"/>
</dbReference>
<dbReference type="RefSeq" id="XP_003011772.1">
    <property type="nucleotide sequence ID" value="XM_003011726.1"/>
</dbReference>
<dbReference type="SMR" id="D4B0M5"/>
<dbReference type="GeneID" id="9523545"/>
<dbReference type="KEGG" id="abe:ARB_02001"/>
<dbReference type="eggNOG" id="ENOG502SS14">
    <property type="taxonomic scope" value="Eukaryota"/>
</dbReference>
<dbReference type="HOGENOM" id="CLU_053014_2_0_1"/>
<dbReference type="OMA" id="CCDWSSD"/>
<dbReference type="OrthoDB" id="5120271at2759"/>
<dbReference type="Proteomes" id="UP000008866">
    <property type="component" value="Unassembled WGS sequence"/>
</dbReference>
<dbReference type="GO" id="GO:0005576">
    <property type="term" value="C:extracellular region"/>
    <property type="evidence" value="ECO:0007669"/>
    <property type="project" value="UniProtKB-SubCell"/>
</dbReference>
<dbReference type="GO" id="GO:0046872">
    <property type="term" value="F:metal ion binding"/>
    <property type="evidence" value="ECO:0007669"/>
    <property type="project" value="UniProtKB-KW"/>
</dbReference>
<dbReference type="GO" id="GO:0004623">
    <property type="term" value="F:phospholipase A2 activity"/>
    <property type="evidence" value="ECO:0007669"/>
    <property type="project" value="InterPro"/>
</dbReference>
<dbReference type="GO" id="GO:0050482">
    <property type="term" value="P:arachidonate secretion"/>
    <property type="evidence" value="ECO:0007669"/>
    <property type="project" value="InterPro"/>
</dbReference>
<dbReference type="GO" id="GO:0016042">
    <property type="term" value="P:lipid catabolic process"/>
    <property type="evidence" value="ECO:0007669"/>
    <property type="project" value="UniProtKB-KW"/>
</dbReference>
<dbReference type="GO" id="GO:0006644">
    <property type="term" value="P:phospholipid metabolic process"/>
    <property type="evidence" value="ECO:0007669"/>
    <property type="project" value="InterPro"/>
</dbReference>
<dbReference type="Gene3D" id="1.20.90.10">
    <property type="entry name" value="Phospholipase A2 domain"/>
    <property type="match status" value="1"/>
</dbReference>
<dbReference type="InterPro" id="IPR036444">
    <property type="entry name" value="PLipase_A2_dom_sf"/>
</dbReference>
<dbReference type="InterPro" id="IPR015141">
    <property type="entry name" value="PLipase_A2_prok/fun"/>
</dbReference>
<dbReference type="Pfam" id="PF09056">
    <property type="entry name" value="Phospholip_A2_3"/>
    <property type="match status" value="1"/>
</dbReference>
<dbReference type="SUPFAM" id="SSF48619">
    <property type="entry name" value="Phospholipase A2, PLA2"/>
    <property type="match status" value="1"/>
</dbReference>
<comment type="function">
    <text evidence="1">Secretory phospholipase that catalyzes the calcium-dependent hydrolysis of the 2-acyl groups in 3-sn-phosphoglycerides (By similarity). Increases the ability to utilize host-derived nutrients and lipids, and promotes lipid dropplets accumulation (By similarity). Plays a role in virulence (By similarity).</text>
</comment>
<comment type="catalytic activity">
    <reaction evidence="1">
        <text>a 1,2-diacyl-sn-glycero-3-phosphocholine + H2O = a 1-acyl-sn-glycero-3-phosphocholine + a fatty acid + H(+)</text>
        <dbReference type="Rhea" id="RHEA:15801"/>
        <dbReference type="ChEBI" id="CHEBI:15377"/>
        <dbReference type="ChEBI" id="CHEBI:15378"/>
        <dbReference type="ChEBI" id="CHEBI:28868"/>
        <dbReference type="ChEBI" id="CHEBI:57643"/>
        <dbReference type="ChEBI" id="CHEBI:58168"/>
        <dbReference type="EC" id="3.1.1.4"/>
    </reaction>
    <physiologicalReaction direction="left-to-right" evidence="1">
        <dbReference type="Rhea" id="RHEA:15802"/>
    </physiologicalReaction>
</comment>
<comment type="cofactor">
    <cofactor evidence="1">
        <name>Ca(2+)</name>
        <dbReference type="ChEBI" id="CHEBI:29108"/>
    </cofactor>
    <text evidence="1">Binds 1 Ca(2+) ion per subunit.</text>
</comment>
<comment type="subcellular location">
    <subcellularLocation>
        <location evidence="6 7">Secreted</location>
    </subcellularLocation>
</comment>
<comment type="similarity">
    <text evidence="8">Belongs to the phospholipase A2 family.</text>
</comment>
<proteinExistence type="evidence at protein level"/>
<keyword id="KW-0106">Calcium</keyword>
<keyword id="KW-1015">Disulfide bond</keyword>
<keyword id="KW-0325">Glycoprotein</keyword>
<keyword id="KW-0378">Hydrolase</keyword>
<keyword id="KW-0442">Lipid degradation</keyword>
<keyword id="KW-0443">Lipid metabolism</keyword>
<keyword id="KW-0479">Metal-binding</keyword>
<keyword id="KW-1185">Reference proteome</keyword>
<keyword id="KW-0964">Secreted</keyword>
<keyword id="KW-0732">Signal</keyword>
<keyword id="KW-0843">Virulence</keyword>
<name>PLA2_ARTBC</name>
<organism>
    <name type="scientific">Arthroderma benhamiae (strain ATCC MYA-4681 / CBS 112371)</name>
    <name type="common">Trichophyton mentagrophytes</name>
    <dbReference type="NCBI Taxonomy" id="663331"/>
    <lineage>
        <taxon>Eukaryota</taxon>
        <taxon>Fungi</taxon>
        <taxon>Dikarya</taxon>
        <taxon>Ascomycota</taxon>
        <taxon>Pezizomycotina</taxon>
        <taxon>Eurotiomycetes</taxon>
        <taxon>Eurotiomycetidae</taxon>
        <taxon>Onygenales</taxon>
        <taxon>Arthrodermataceae</taxon>
        <taxon>Trichophyton</taxon>
    </lineage>
</organism>